<organism>
    <name type="scientific">Drosophila melanogaster</name>
    <name type="common">Fruit fly</name>
    <dbReference type="NCBI Taxonomy" id="7227"/>
    <lineage>
        <taxon>Eukaryota</taxon>
        <taxon>Metazoa</taxon>
        <taxon>Ecdysozoa</taxon>
        <taxon>Arthropoda</taxon>
        <taxon>Hexapoda</taxon>
        <taxon>Insecta</taxon>
        <taxon>Pterygota</taxon>
        <taxon>Neoptera</taxon>
        <taxon>Endopterygota</taxon>
        <taxon>Diptera</taxon>
        <taxon>Brachycera</taxon>
        <taxon>Muscomorpha</taxon>
        <taxon>Ephydroidea</taxon>
        <taxon>Drosophilidae</taxon>
        <taxon>Drosophila</taxon>
        <taxon>Sophophora</taxon>
    </lineage>
</organism>
<proteinExistence type="evidence at protein level"/>
<reference evidence="11 13" key="1">
    <citation type="journal article" date="1999" name="Genes Dev.">
        <title>The balance between isoforms of the prickle LIM domain protein is critical for planar polarity in Drosophila imaginal discs.</title>
        <authorList>
            <person name="Gubb D."/>
            <person name="Green C."/>
            <person name="Huen D."/>
            <person name="Coulson D."/>
            <person name="Johnson G."/>
            <person name="Tree D.R.P."/>
            <person name="Collier S."/>
            <person name="Roote J."/>
        </authorList>
    </citation>
    <scope>NUCLEOTIDE SEQUENCE [MRNA] (ISOFORMS A; B AND C)</scope>
    <scope>TISSUE SPECIFICITY</scope>
    <scope>DEVELOPMENTAL STAGE</scope>
    <source>
        <strain>DP CN BW</strain>
        <tissue evidence="4">Embryo</tissue>
    </source>
</reference>
<reference evidence="12" key="2">
    <citation type="journal article" date="2000" name="Science">
        <title>The genome sequence of Drosophila melanogaster.</title>
        <authorList>
            <person name="Adams M.D."/>
            <person name="Celniker S.E."/>
            <person name="Holt R.A."/>
            <person name="Evans C.A."/>
            <person name="Gocayne J.D."/>
            <person name="Amanatides P.G."/>
            <person name="Scherer S.E."/>
            <person name="Li P.W."/>
            <person name="Hoskins R.A."/>
            <person name="Galle R.F."/>
            <person name="George R.A."/>
            <person name="Lewis S.E."/>
            <person name="Richards S."/>
            <person name="Ashburner M."/>
            <person name="Henderson S.N."/>
            <person name="Sutton G.G."/>
            <person name="Wortman J.R."/>
            <person name="Yandell M.D."/>
            <person name="Zhang Q."/>
            <person name="Chen L.X."/>
            <person name="Brandon R.C."/>
            <person name="Rogers Y.-H.C."/>
            <person name="Blazej R.G."/>
            <person name="Champe M."/>
            <person name="Pfeiffer B.D."/>
            <person name="Wan K.H."/>
            <person name="Doyle C."/>
            <person name="Baxter E.G."/>
            <person name="Helt G."/>
            <person name="Nelson C.R."/>
            <person name="Miklos G.L.G."/>
            <person name="Abril J.F."/>
            <person name="Agbayani A."/>
            <person name="An H.-J."/>
            <person name="Andrews-Pfannkoch C."/>
            <person name="Baldwin D."/>
            <person name="Ballew R.M."/>
            <person name="Basu A."/>
            <person name="Baxendale J."/>
            <person name="Bayraktaroglu L."/>
            <person name="Beasley E.M."/>
            <person name="Beeson K.Y."/>
            <person name="Benos P.V."/>
            <person name="Berman B.P."/>
            <person name="Bhandari D."/>
            <person name="Bolshakov S."/>
            <person name="Borkova D."/>
            <person name="Botchan M.R."/>
            <person name="Bouck J."/>
            <person name="Brokstein P."/>
            <person name="Brottier P."/>
            <person name="Burtis K.C."/>
            <person name="Busam D.A."/>
            <person name="Butler H."/>
            <person name="Cadieu E."/>
            <person name="Center A."/>
            <person name="Chandra I."/>
            <person name="Cherry J.M."/>
            <person name="Cawley S."/>
            <person name="Dahlke C."/>
            <person name="Davenport L.B."/>
            <person name="Davies P."/>
            <person name="de Pablos B."/>
            <person name="Delcher A."/>
            <person name="Deng Z."/>
            <person name="Mays A.D."/>
            <person name="Dew I."/>
            <person name="Dietz S.M."/>
            <person name="Dodson K."/>
            <person name="Doup L.E."/>
            <person name="Downes M."/>
            <person name="Dugan-Rocha S."/>
            <person name="Dunkov B.C."/>
            <person name="Dunn P."/>
            <person name="Durbin K.J."/>
            <person name="Evangelista C.C."/>
            <person name="Ferraz C."/>
            <person name="Ferriera S."/>
            <person name="Fleischmann W."/>
            <person name="Fosler C."/>
            <person name="Gabrielian A.E."/>
            <person name="Garg N.S."/>
            <person name="Gelbart W.M."/>
            <person name="Glasser K."/>
            <person name="Glodek A."/>
            <person name="Gong F."/>
            <person name="Gorrell J.H."/>
            <person name="Gu Z."/>
            <person name="Guan P."/>
            <person name="Harris M."/>
            <person name="Harris N.L."/>
            <person name="Harvey D.A."/>
            <person name="Heiman T.J."/>
            <person name="Hernandez J.R."/>
            <person name="Houck J."/>
            <person name="Hostin D."/>
            <person name="Houston K.A."/>
            <person name="Howland T.J."/>
            <person name="Wei M.-H."/>
            <person name="Ibegwam C."/>
            <person name="Jalali M."/>
            <person name="Kalush F."/>
            <person name="Karpen G.H."/>
            <person name="Ke Z."/>
            <person name="Kennison J.A."/>
            <person name="Ketchum K.A."/>
            <person name="Kimmel B.E."/>
            <person name="Kodira C.D."/>
            <person name="Kraft C.L."/>
            <person name="Kravitz S."/>
            <person name="Kulp D."/>
            <person name="Lai Z."/>
            <person name="Lasko P."/>
            <person name="Lei Y."/>
            <person name="Levitsky A.A."/>
            <person name="Li J.H."/>
            <person name="Li Z."/>
            <person name="Liang Y."/>
            <person name="Lin X."/>
            <person name="Liu X."/>
            <person name="Mattei B."/>
            <person name="McIntosh T.C."/>
            <person name="McLeod M.P."/>
            <person name="McPherson D."/>
            <person name="Merkulov G."/>
            <person name="Milshina N.V."/>
            <person name="Mobarry C."/>
            <person name="Morris J."/>
            <person name="Moshrefi A."/>
            <person name="Mount S.M."/>
            <person name="Moy M."/>
            <person name="Murphy B."/>
            <person name="Murphy L."/>
            <person name="Muzny D.M."/>
            <person name="Nelson D.L."/>
            <person name="Nelson D.R."/>
            <person name="Nelson K.A."/>
            <person name="Nixon K."/>
            <person name="Nusskern D.R."/>
            <person name="Pacleb J.M."/>
            <person name="Palazzolo M."/>
            <person name="Pittman G.S."/>
            <person name="Pan S."/>
            <person name="Pollard J."/>
            <person name="Puri V."/>
            <person name="Reese M.G."/>
            <person name="Reinert K."/>
            <person name="Remington K."/>
            <person name="Saunders R.D.C."/>
            <person name="Scheeler F."/>
            <person name="Shen H."/>
            <person name="Shue B.C."/>
            <person name="Siden-Kiamos I."/>
            <person name="Simpson M."/>
            <person name="Skupski M.P."/>
            <person name="Smith T.J."/>
            <person name="Spier E."/>
            <person name="Spradling A.C."/>
            <person name="Stapleton M."/>
            <person name="Strong R."/>
            <person name="Sun E."/>
            <person name="Svirskas R."/>
            <person name="Tector C."/>
            <person name="Turner R."/>
            <person name="Venter E."/>
            <person name="Wang A.H."/>
            <person name="Wang X."/>
            <person name="Wang Z.-Y."/>
            <person name="Wassarman D.A."/>
            <person name="Weinstock G.M."/>
            <person name="Weissenbach J."/>
            <person name="Williams S.M."/>
            <person name="Woodage T."/>
            <person name="Worley K.C."/>
            <person name="Wu D."/>
            <person name="Yang S."/>
            <person name="Yao Q.A."/>
            <person name="Ye J."/>
            <person name="Yeh R.-F."/>
            <person name="Zaveri J.S."/>
            <person name="Zhan M."/>
            <person name="Zhang G."/>
            <person name="Zhao Q."/>
            <person name="Zheng L."/>
            <person name="Zheng X.H."/>
            <person name="Zhong F.N."/>
            <person name="Zhong W."/>
            <person name="Zhou X."/>
            <person name="Zhu S.C."/>
            <person name="Zhu X."/>
            <person name="Smith H.O."/>
            <person name="Gibbs R.A."/>
            <person name="Myers E.W."/>
            <person name="Rubin G.M."/>
            <person name="Venter J.C."/>
        </authorList>
    </citation>
    <scope>NUCLEOTIDE SEQUENCE [LARGE SCALE GENOMIC DNA]</scope>
    <source>
        <strain evidence="5">Berkeley</strain>
    </source>
</reference>
<reference evidence="11 12" key="3">
    <citation type="journal article" date="2002" name="Genome Biol.">
        <title>Annotation of the Drosophila melanogaster euchromatic genome: a systematic review.</title>
        <authorList>
            <person name="Misra S."/>
            <person name="Crosby M.A."/>
            <person name="Mungall C.J."/>
            <person name="Matthews B.B."/>
            <person name="Campbell K.S."/>
            <person name="Hradecky P."/>
            <person name="Huang Y."/>
            <person name="Kaminker J.S."/>
            <person name="Millburn G.H."/>
            <person name="Prochnik S.E."/>
            <person name="Smith C.D."/>
            <person name="Tupy J.L."/>
            <person name="Whitfield E.J."/>
            <person name="Bayraktaroglu L."/>
            <person name="Berman B.P."/>
            <person name="Bettencourt B.R."/>
            <person name="Celniker S.E."/>
            <person name="de Grey A.D.N.J."/>
            <person name="Drysdale R.A."/>
            <person name="Harris N.L."/>
            <person name="Richter J."/>
            <person name="Russo S."/>
            <person name="Schroeder A.J."/>
            <person name="Shu S.Q."/>
            <person name="Stapleton M."/>
            <person name="Yamada C."/>
            <person name="Ashburner M."/>
            <person name="Gelbart W.M."/>
            <person name="Rubin G.M."/>
            <person name="Lewis S.E."/>
        </authorList>
    </citation>
    <scope>GENOME REANNOTATION</scope>
    <scope>ALTERNATIVE SPLICING</scope>
    <source>
        <strain>Berkeley</strain>
    </source>
</reference>
<reference evidence="11" key="4">
    <citation type="journal article" date="2002" name="Cell">
        <title>Prickle mediates feedback amplification to generate asymmetric planar cell polarity signaling.</title>
        <authorList>
            <person name="Tree D.R.P."/>
            <person name="Shulman J.M."/>
            <person name="Rousset R."/>
            <person name="Scott M.P."/>
            <person name="Gubb D."/>
            <person name="Axelrod J.D."/>
        </authorList>
    </citation>
    <scope>FUNCTION</scope>
    <scope>INTERACTION WITH DSH</scope>
    <scope>SUBCELLULAR LOCATION</scope>
    <scope>TISSUE SPECIFICITY</scope>
    <scope>DISRUPTION PHENOTYPE</scope>
</reference>
<reference evidence="11" key="5">
    <citation type="journal article" date="2003" name="EMBO J.">
        <title>Prickle and Strabismus form a functional complex to generate a correct axis during planar cell polarity signaling.</title>
        <authorList>
            <person name="Jenny A."/>
            <person name="Darken R.S."/>
            <person name="Wilson P.A."/>
            <person name="Mlodzik M."/>
        </authorList>
    </citation>
    <scope>INTERACTION WITH VANG</scope>
    <scope>SUBCELLULAR LOCATION</scope>
</reference>
<reference evidence="11" key="6">
    <citation type="journal article" date="2003" name="Development">
        <title>Strabismus requires Flamingo and Prickle function to regulate tissue polarity in the Drosophila eye.</title>
        <authorList>
            <person name="Rawls A.S."/>
            <person name="Wolff T."/>
        </authorList>
    </citation>
    <scope>FUNCTION</scope>
    <scope>INTERACTION WITH VANG</scope>
    <scope>SUBCELLULAR LOCATION</scope>
    <scope>TISSUE SPECIFICITY</scope>
    <scope>DISRUPTION PHENOTYPE</scope>
</reference>
<reference evidence="11" key="7">
    <citation type="journal article" date="2005" name="Nat. Cell Biol.">
        <title>Diego and Prickle regulate Frizzled planar cell polarity signalling by competing for Dishevelled binding.</title>
        <authorList>
            <person name="Jenny A."/>
            <person name="Reynolds-Kenneally J."/>
            <person name="Das G."/>
            <person name="Burnett M."/>
            <person name="Mlodzik M."/>
        </authorList>
    </citation>
    <scope>FUNCTION</scope>
    <scope>INTERACTION WITH DSH</scope>
    <scope>SUBCELLULAR LOCATION</scope>
    <scope>TISSUE SPECIFICITY</scope>
    <scope>DISRUPTION PHENOTYPE</scope>
</reference>
<evidence type="ECO:0000255" key="1">
    <source>
        <dbReference type="PROSITE-ProRule" id="PRU00125"/>
    </source>
</evidence>
<evidence type="ECO:0000255" key="2">
    <source>
        <dbReference type="PROSITE-ProRule" id="PRU00636"/>
    </source>
</evidence>
<evidence type="ECO:0000256" key="3">
    <source>
        <dbReference type="SAM" id="MobiDB-lite"/>
    </source>
</evidence>
<evidence type="ECO:0000269" key="4">
    <source>
    </source>
</evidence>
<evidence type="ECO:0000269" key="5">
    <source>
    </source>
</evidence>
<evidence type="ECO:0000269" key="6">
    <source>
    </source>
</evidence>
<evidence type="ECO:0000269" key="7">
    <source>
    </source>
</evidence>
<evidence type="ECO:0000269" key="8">
    <source>
    </source>
</evidence>
<evidence type="ECO:0000269" key="9">
    <source>
    </source>
</evidence>
<evidence type="ECO:0000303" key="10">
    <source>
    </source>
</evidence>
<evidence type="ECO:0000305" key="11"/>
<evidence type="ECO:0000312" key="12">
    <source>
        <dbReference type="EMBL" id="AAF59281.2"/>
    </source>
</evidence>
<evidence type="ECO:0000312" key="13">
    <source>
        <dbReference type="EMBL" id="CAB57345.3"/>
    </source>
</evidence>
<feature type="chain" id="PRO_0000288834" description="Protein prickle">
    <location>
        <begin position="1"/>
        <end position="1299"/>
    </location>
</feature>
<feature type="domain" description="PET" evidence="2">
    <location>
        <begin position="515"/>
        <end position="623"/>
    </location>
</feature>
<feature type="domain" description="LIM zinc-binding 1" evidence="1">
    <location>
        <begin position="622"/>
        <end position="686"/>
    </location>
</feature>
<feature type="domain" description="LIM zinc-binding 2" evidence="1">
    <location>
        <begin position="687"/>
        <end position="747"/>
    </location>
</feature>
<feature type="domain" description="LIM zinc-binding 3" evidence="1">
    <location>
        <begin position="748"/>
        <end position="810"/>
    </location>
</feature>
<feature type="region of interest" description="Disordered" evidence="3">
    <location>
        <begin position="1"/>
        <end position="24"/>
    </location>
</feature>
<feature type="region of interest" description="Disordered" evidence="3">
    <location>
        <begin position="115"/>
        <end position="181"/>
    </location>
</feature>
<feature type="region of interest" description="Disordered" evidence="3">
    <location>
        <begin position="241"/>
        <end position="289"/>
    </location>
</feature>
<feature type="region of interest" description="Disordered" evidence="3">
    <location>
        <begin position="368"/>
        <end position="396"/>
    </location>
</feature>
<feature type="region of interest" description="Disordered" evidence="3">
    <location>
        <begin position="425"/>
        <end position="527"/>
    </location>
</feature>
<feature type="region of interest" description="Disordered" evidence="3">
    <location>
        <begin position="807"/>
        <end position="865"/>
    </location>
</feature>
<feature type="region of interest" description="Disordered" evidence="3">
    <location>
        <begin position="902"/>
        <end position="940"/>
    </location>
</feature>
<feature type="region of interest" description="Disordered" evidence="3">
    <location>
        <begin position="1026"/>
        <end position="1249"/>
    </location>
</feature>
<feature type="compositionally biased region" description="Gly residues" evidence="3">
    <location>
        <begin position="1"/>
        <end position="19"/>
    </location>
</feature>
<feature type="compositionally biased region" description="Basic residues" evidence="3">
    <location>
        <begin position="145"/>
        <end position="159"/>
    </location>
</feature>
<feature type="compositionally biased region" description="Polar residues" evidence="3">
    <location>
        <begin position="168"/>
        <end position="181"/>
    </location>
</feature>
<feature type="compositionally biased region" description="Pro residues" evidence="3">
    <location>
        <begin position="263"/>
        <end position="272"/>
    </location>
</feature>
<feature type="compositionally biased region" description="Low complexity" evidence="3">
    <location>
        <begin position="425"/>
        <end position="434"/>
    </location>
</feature>
<feature type="compositionally biased region" description="Gly residues" evidence="3">
    <location>
        <begin position="435"/>
        <end position="445"/>
    </location>
</feature>
<feature type="compositionally biased region" description="Polar residues" evidence="3">
    <location>
        <begin position="457"/>
        <end position="469"/>
    </location>
</feature>
<feature type="compositionally biased region" description="Basic and acidic residues" evidence="3">
    <location>
        <begin position="516"/>
        <end position="525"/>
    </location>
</feature>
<feature type="compositionally biased region" description="Low complexity" evidence="3">
    <location>
        <begin position="844"/>
        <end position="864"/>
    </location>
</feature>
<feature type="compositionally biased region" description="Polar residues" evidence="3">
    <location>
        <begin position="922"/>
        <end position="934"/>
    </location>
</feature>
<feature type="compositionally biased region" description="Polar residues" evidence="3">
    <location>
        <begin position="1070"/>
        <end position="1081"/>
    </location>
</feature>
<feature type="compositionally biased region" description="Low complexity" evidence="3">
    <location>
        <begin position="1089"/>
        <end position="1101"/>
    </location>
</feature>
<feature type="compositionally biased region" description="Basic and acidic residues" evidence="3">
    <location>
        <begin position="1136"/>
        <end position="1150"/>
    </location>
</feature>
<feature type="compositionally biased region" description="Basic residues" evidence="3">
    <location>
        <begin position="1151"/>
        <end position="1183"/>
    </location>
</feature>
<feature type="compositionally biased region" description="Basic and acidic residues" evidence="3">
    <location>
        <begin position="1216"/>
        <end position="1231"/>
    </location>
</feature>
<feature type="compositionally biased region" description="Low complexity" evidence="3">
    <location>
        <begin position="1238"/>
        <end position="1249"/>
    </location>
</feature>
<feature type="splice variant" id="VSP_052412" description="In isoform B." evidence="10">
    <original>SSLSTGGGAGGSSGGPGGADAAAAPAAGQATVTATGNMEPAMVPRTANLLACKQWWRVCFLYGDQQKYYRQLYSKAAAQ</original>
    <variation>NDSTDNLHADCDGRVSNNNNGNSNTNDGPNNDGDSDEEVIEGMALLEGNYQVLRQWVPPAPNYWDAPPKAIIKSAEVR</variation>
    <location>
        <begin position="2"/>
        <end position="80"/>
    </location>
</feature>
<feature type="splice variant" id="VSP_052413" description="In isoform A." evidence="10">
    <original>SSLSTGGGAGGS</original>
    <variation>DTPNQMPVELER</variation>
    <location>
        <begin position="2"/>
        <end position="13"/>
    </location>
</feature>
<feature type="splice variant" id="VSP_052414" description="In isoform A." evidence="10">
    <location>
        <begin position="14"/>
        <end position="349"/>
    </location>
</feature>
<feature type="splice variant" id="VSP_052415" description="In isoform B." evidence="10">
    <location>
        <begin position="81"/>
        <end position="349"/>
    </location>
</feature>
<feature type="sequence conflict" description="In Ref. 1; CAB57345." evidence="11" ref="1">
    <original>ESS</original>
    <variation>VSN</variation>
    <location>
        <begin position="175"/>
        <end position="177"/>
    </location>
</feature>
<feature type="sequence conflict" description="In Ref. 1; CAB57345." evidence="11" ref="1">
    <original>V</original>
    <variation>A</variation>
    <location>
        <position position="188"/>
    </location>
</feature>
<feature type="sequence conflict" description="In Ref. 1; CAB57345." evidence="11" ref="1">
    <original>Q</original>
    <variation>P</variation>
    <location>
        <position position="279"/>
    </location>
</feature>
<feature type="sequence conflict" description="In Ref. 1; CAB57344/CAB57345/CAB99211." evidence="11" ref="1">
    <original>A</original>
    <variation>G</variation>
    <location>
        <position position="715"/>
    </location>
</feature>
<feature type="sequence conflict" description="In Ref. 1; CAB57344/CAB57345/CAB99211." evidence="11" ref="1">
    <original>A</original>
    <variation>G</variation>
    <location>
        <position position="746"/>
    </location>
</feature>
<feature type="sequence conflict" description="In Ref. 1; CAB57344/CAB57345/CAB99211." evidence="11" ref="1">
    <original>A</original>
    <variation>G</variation>
    <location>
        <position position="755"/>
    </location>
</feature>
<feature type="sequence conflict" description="In Ref. 1; CAB57344/CAB57345/CAB99211." evidence="11" ref="1">
    <original>A</original>
    <variation>G</variation>
    <location>
        <position position="797"/>
    </location>
</feature>
<feature type="sequence conflict" description="In Ref. 1; CAB57344/CAB57345/CAB99211." evidence="11" ref="1">
    <original>R</original>
    <variation>G</variation>
    <location>
        <position position="830"/>
    </location>
</feature>
<feature type="sequence conflict" description="In Ref. 1; CAB57344/CAB57345/CAB99211." evidence="11" ref="1">
    <original>S</original>
    <variation>P</variation>
    <location>
        <position position="970"/>
    </location>
</feature>
<feature type="sequence conflict" description="In Ref. 1; CAB57344/CAB57345/CAB99211." evidence="11" ref="1">
    <original>L</original>
    <variation>V</variation>
    <location>
        <position position="1029"/>
    </location>
</feature>
<feature type="sequence conflict" description="In Ref. 1; CAB57344/CAB57345/CAB99211." evidence="11" ref="1">
    <original>G</original>
    <variation>S</variation>
    <location>
        <position position="1134"/>
    </location>
</feature>
<feature type="sequence conflict" description="In Ref. 1; CAB57344/CAB57345/CAB99211." evidence="11" ref="1">
    <original>E</original>
    <variation>K</variation>
    <location>
        <position position="1231"/>
    </location>
</feature>
<name>PRIC1_DROME</name>
<comment type="function">
    <text evidence="6 7 9">Acts in a planar cell polarity (PCP) complex; polarization along the apical/basal axis of epithelial cells. Correct expression of the alternative isoforms is required for PCP signaling in imaginal disks. PCP signaling in the wing disk requires the receptor fz and the cytoplasmic proteins dsh and pk. These act in a feedback loop leading to activation of the jnk cascade and subsequent polarized arrangement of hairs and bristles. Dgo and pk compete with one another for dsh binding, thereby modulating fz dsh activity and ensuring tight control over fz PCP signaling. Vang, stan and pk function together to regulate the establishment of tissue polarity in the adult eye.</text>
</comment>
<comment type="subunit">
    <text evidence="6 7 8 9">Interacts with dsh; PET and LIM domains interact with dsh DEP domain, in wing cells. Interacts with Vang in photoreceptor cells.</text>
</comment>
<comment type="subcellular location">
    <subcellularLocation>
        <location evidence="6 7 8 9">Cell membrane</location>
        <topology evidence="6 7 8 9">Peripheral membrane protein</topology>
        <orientation evidence="6 7 8 9">Cytoplasmic side</orientation>
    </subcellularLocation>
    <text evidence="6 7 8 9">Localized to the proximal wing cell boundary where fz and dsh localization is antagonized by binding the dsh DEP domain and preventing dsh cortical localization. Localization to the anterior photoreceptor cell membrane.</text>
</comment>
<comment type="alternative products">
    <event type="alternative splicing"/>
    <isoform>
        <id>A1Z6W3-1</id>
        <name evidence="5">C</name>
        <name evidence="4">sple</name>
        <sequence type="displayed"/>
    </isoform>
    <isoform>
        <id>A1Z6W3-2</id>
        <name evidence="5">A</name>
        <name evidence="4">pk</name>
        <sequence type="described" ref="VSP_052413 VSP_052414"/>
    </isoform>
    <isoform>
        <id>A1Z6W3-3</id>
        <name evidence="5">B</name>
        <name evidence="4">pkM</name>
        <sequence type="described" ref="VSP_052412 VSP_052415"/>
    </isoform>
</comment>
<comment type="tissue specificity">
    <text evidence="4 6 7 9">Expressed in the wing, leg and eye imaginal disks. Expressed within the photoreceptors of the eye.</text>
</comment>
<comment type="developmental stage">
    <text evidence="4">Expressed both maternally and zygotically. Isoform B is expressed in embryos only. Isoform A and isoform C are expressed in embryos and pupae.</text>
</comment>
<comment type="disruption phenotype">
    <text evidence="6 7 9">Flies exhibit aberrant hair and bristle orientation on the wings and aberrant ommatidial arrangement in the compound eye.</text>
</comment>
<comment type="similarity">
    <text evidence="11">Belongs to the prickle / espinas / testin family.</text>
</comment>
<accession>A1Z6W3</accession>
<accession>A1Z6V4</accession>
<accession>A1Z6V8</accession>
<accession>Q9N9H6</accession>
<accession>Q9U5X0</accession>
<accession>Q9U5X1</accession>
<gene>
    <name evidence="12" type="primary">pk</name>
    <name type="ORF">CG11084</name>
</gene>
<dbReference type="EMBL" id="AJ243708">
    <property type="protein sequence ID" value="CAB57344.3"/>
    <property type="molecule type" value="mRNA"/>
</dbReference>
<dbReference type="EMBL" id="AJ243710">
    <property type="protein sequence ID" value="CAB57345.3"/>
    <property type="molecule type" value="mRNA"/>
</dbReference>
<dbReference type="EMBL" id="AJ243709">
    <property type="protein sequence ID" value="CAB99211.2"/>
    <property type="molecule type" value="mRNA"/>
</dbReference>
<dbReference type="EMBL" id="AE013599">
    <property type="protein sequence ID" value="AAF59281.2"/>
    <property type="molecule type" value="Genomic_DNA"/>
</dbReference>
<dbReference type="EMBL" id="AE013599">
    <property type="protein sequence ID" value="AAF59284.2"/>
    <property type="molecule type" value="Genomic_DNA"/>
</dbReference>
<dbReference type="EMBL" id="AE013599">
    <property type="protein sequence ID" value="AAM68908.1"/>
    <property type="molecule type" value="Genomic_DNA"/>
</dbReference>
<dbReference type="RefSeq" id="NP_724534.1">
    <molecule id="A1Z6W3-2"/>
    <property type="nucleotide sequence ID" value="NM_165508.2"/>
</dbReference>
<dbReference type="RefSeq" id="NP_724535.1">
    <molecule id="A1Z6W3-3"/>
    <property type="nucleotide sequence ID" value="NM_165509.2"/>
</dbReference>
<dbReference type="RefSeq" id="NP_724538.1">
    <molecule id="A1Z6W3-1"/>
    <property type="nucleotide sequence ID" value="NM_165512.2"/>
</dbReference>
<dbReference type="SMR" id="A1Z6W3"/>
<dbReference type="BioGRID" id="69608">
    <property type="interactions" value="31"/>
</dbReference>
<dbReference type="DIP" id="DIP-59584N"/>
<dbReference type="FunCoup" id="A1Z6W3">
    <property type="interactions" value="149"/>
</dbReference>
<dbReference type="IntAct" id="A1Z6W3">
    <property type="interactions" value="4"/>
</dbReference>
<dbReference type="STRING" id="7227.FBpp0088115"/>
<dbReference type="GlyGen" id="A1Z6W3">
    <property type="glycosylation" value="4 sites"/>
</dbReference>
<dbReference type="PaxDb" id="7227-FBpp0088115"/>
<dbReference type="EnsemblMetazoa" id="FBtr0089042">
    <molecule id="A1Z6W3-2"/>
    <property type="protein sequence ID" value="FBpp0088113"/>
    <property type="gene ID" value="FBgn0003090"/>
</dbReference>
<dbReference type="EnsemblMetazoa" id="FBtr0089043">
    <molecule id="A1Z6W3-3"/>
    <property type="protein sequence ID" value="FBpp0088114"/>
    <property type="gene ID" value="FBgn0003090"/>
</dbReference>
<dbReference type="EnsemblMetazoa" id="FBtr0089044">
    <molecule id="A1Z6W3-1"/>
    <property type="protein sequence ID" value="FBpp0088115"/>
    <property type="gene ID" value="FBgn0003090"/>
</dbReference>
<dbReference type="GeneID" id="45343"/>
<dbReference type="KEGG" id="dme:Dmel_CG11084"/>
<dbReference type="AGR" id="FB:FBgn0003090"/>
<dbReference type="CTD" id="18745"/>
<dbReference type="FlyBase" id="FBgn0003090">
    <property type="gene designation" value="pk"/>
</dbReference>
<dbReference type="VEuPathDB" id="VectorBase:FBgn0003090"/>
<dbReference type="eggNOG" id="KOG1704">
    <property type="taxonomic scope" value="Eukaryota"/>
</dbReference>
<dbReference type="GeneTree" id="ENSGT00940000153629"/>
<dbReference type="InParanoid" id="A1Z6W3"/>
<dbReference type="OMA" id="GQEYDTV"/>
<dbReference type="OrthoDB" id="10069167at2759"/>
<dbReference type="PhylomeDB" id="A1Z6W3"/>
<dbReference type="Reactome" id="R-DME-350368">
    <property type="pathway name" value="Activation of RHO1 by FZ:DSH complex"/>
</dbReference>
<dbReference type="Reactome" id="R-DME-350369">
    <property type="pathway name" value="Negative feedback loop regulates asymmetric localisation"/>
</dbReference>
<dbReference type="Reactome" id="R-DME-350376">
    <property type="pathway name" value="Activation of RAC1:GTP by FZ:DSH complex"/>
</dbReference>
<dbReference type="Reactome" id="R-DME-350411">
    <property type="pathway name" value="Formation and asymmetric localisation of transmembrane complexes"/>
</dbReference>
<dbReference type="Reactome" id="R-DME-350480">
    <property type="pathway name" value="Activation of non-muscle Myosin II"/>
</dbReference>
<dbReference type="Reactome" id="R-DME-450728">
    <property type="pathway name" value="Inhibition of actin polymerization"/>
</dbReference>
<dbReference type="Reactome" id="R-DME-4608870">
    <property type="pathway name" value="Asymmetric localization of PCP proteins"/>
</dbReference>
<dbReference type="BioGRID-ORCS" id="45343">
    <property type="hits" value="0 hits in 3 CRISPR screens"/>
</dbReference>
<dbReference type="GenomeRNAi" id="45343"/>
<dbReference type="PRO" id="PR:A1Z6W3"/>
<dbReference type="Proteomes" id="UP000000803">
    <property type="component" value="Chromosome 2R"/>
</dbReference>
<dbReference type="Bgee" id="FBgn0003090">
    <property type="expression patterns" value="Expressed in escort cell (Drosophila) in ovary and 76 other cell types or tissues"/>
</dbReference>
<dbReference type="ExpressionAtlas" id="A1Z6W3">
    <property type="expression patterns" value="baseline and differential"/>
</dbReference>
<dbReference type="GO" id="GO:0030424">
    <property type="term" value="C:axon"/>
    <property type="evidence" value="ECO:0007669"/>
    <property type="project" value="GOC"/>
</dbReference>
<dbReference type="GO" id="GO:0005737">
    <property type="term" value="C:cytoplasm"/>
    <property type="evidence" value="ECO:0000304"/>
    <property type="project" value="FlyBase"/>
</dbReference>
<dbReference type="GO" id="GO:0005829">
    <property type="term" value="C:cytosol"/>
    <property type="evidence" value="ECO:0000304"/>
    <property type="project" value="Reactome"/>
</dbReference>
<dbReference type="GO" id="GO:0005886">
    <property type="term" value="C:plasma membrane"/>
    <property type="evidence" value="ECO:0000314"/>
    <property type="project" value="UniProtKB"/>
</dbReference>
<dbReference type="GO" id="GO:0008270">
    <property type="term" value="F:zinc ion binding"/>
    <property type="evidence" value="ECO:0007669"/>
    <property type="project" value="InterPro"/>
</dbReference>
<dbReference type="GO" id="GO:0009948">
    <property type="term" value="P:anterior/posterior axis specification"/>
    <property type="evidence" value="ECO:0000315"/>
    <property type="project" value="UniProtKB"/>
</dbReference>
<dbReference type="GO" id="GO:0098930">
    <property type="term" value="P:axonal transport"/>
    <property type="evidence" value="ECO:0000315"/>
    <property type="project" value="FlyBase"/>
</dbReference>
<dbReference type="GO" id="GO:0001737">
    <property type="term" value="P:establishment of imaginal disc-derived wing hair orientation"/>
    <property type="evidence" value="ECO:0000315"/>
    <property type="project" value="FlyBase"/>
</dbReference>
<dbReference type="GO" id="GO:0042067">
    <property type="term" value="P:establishment of ommatidial planar polarity"/>
    <property type="evidence" value="ECO:0000315"/>
    <property type="project" value="FlyBase"/>
</dbReference>
<dbReference type="GO" id="GO:0001736">
    <property type="term" value="P:establishment of planar polarity"/>
    <property type="evidence" value="ECO:0000315"/>
    <property type="project" value="UniProtKB"/>
</dbReference>
<dbReference type="GO" id="GO:0045184">
    <property type="term" value="P:establishment of protein localization"/>
    <property type="evidence" value="ECO:0000304"/>
    <property type="project" value="FlyBase"/>
</dbReference>
<dbReference type="GO" id="GO:0007164">
    <property type="term" value="P:establishment of tissue polarity"/>
    <property type="evidence" value="ECO:0000315"/>
    <property type="project" value="UniProtKB"/>
</dbReference>
<dbReference type="GO" id="GO:0007163">
    <property type="term" value="P:establishment or maintenance of cell polarity"/>
    <property type="evidence" value="ECO:0000315"/>
    <property type="project" value="FlyBase"/>
</dbReference>
<dbReference type="GO" id="GO:0030951">
    <property type="term" value="P:establishment or maintenance of microtubule cytoskeleton polarity"/>
    <property type="evidence" value="ECO:0000315"/>
    <property type="project" value="FlyBase"/>
</dbReference>
<dbReference type="GO" id="GO:0045185">
    <property type="term" value="P:maintenance of protein location"/>
    <property type="evidence" value="ECO:0000304"/>
    <property type="project" value="FlyBase"/>
</dbReference>
<dbReference type="GO" id="GO:0001738">
    <property type="term" value="P:morphogenesis of a polarized epithelium"/>
    <property type="evidence" value="ECO:0000315"/>
    <property type="project" value="FlyBase"/>
</dbReference>
<dbReference type="GO" id="GO:0016318">
    <property type="term" value="P:ommatidial rotation"/>
    <property type="evidence" value="ECO:0000315"/>
    <property type="project" value="FlyBase"/>
</dbReference>
<dbReference type="GO" id="GO:0045773">
    <property type="term" value="P:positive regulation of axon extension"/>
    <property type="evidence" value="ECO:0000316"/>
    <property type="project" value="FlyBase"/>
</dbReference>
<dbReference type="GO" id="GO:1902669">
    <property type="term" value="P:positive regulation of axon guidance"/>
    <property type="evidence" value="ECO:0000315"/>
    <property type="project" value="FlyBase"/>
</dbReference>
<dbReference type="CDD" id="cd09415">
    <property type="entry name" value="LIM1_Prickle"/>
    <property type="match status" value="1"/>
</dbReference>
<dbReference type="CDD" id="cd09418">
    <property type="entry name" value="LIM2_Prickle"/>
    <property type="match status" value="1"/>
</dbReference>
<dbReference type="CDD" id="cd09420">
    <property type="entry name" value="LIM3_Prickle"/>
    <property type="match status" value="1"/>
</dbReference>
<dbReference type="CDD" id="cd09827">
    <property type="entry name" value="PET_Prickle"/>
    <property type="match status" value="1"/>
</dbReference>
<dbReference type="FunFam" id="2.10.110.10:FF:000035">
    <property type="entry name" value="prickle-like protein 2 isoform X1"/>
    <property type="match status" value="1"/>
</dbReference>
<dbReference type="FunFam" id="2.10.110.10:FF:000005">
    <property type="entry name" value="Testin isoform 1"/>
    <property type="match status" value="1"/>
</dbReference>
<dbReference type="Gene3D" id="2.10.110.10">
    <property type="entry name" value="Cysteine Rich Protein"/>
    <property type="match status" value="3"/>
</dbReference>
<dbReference type="InterPro" id="IPR033725">
    <property type="entry name" value="LIM1_prickle"/>
</dbReference>
<dbReference type="InterPro" id="IPR033726">
    <property type="entry name" value="LIM2_prickle"/>
</dbReference>
<dbReference type="InterPro" id="IPR033727">
    <property type="entry name" value="LIM3_prickle"/>
</dbReference>
<dbReference type="InterPro" id="IPR010442">
    <property type="entry name" value="PET_domain"/>
</dbReference>
<dbReference type="InterPro" id="IPR033723">
    <property type="entry name" value="PET_prickle"/>
</dbReference>
<dbReference type="InterPro" id="IPR047120">
    <property type="entry name" value="Pk/Esn/Tes"/>
</dbReference>
<dbReference type="InterPro" id="IPR001781">
    <property type="entry name" value="Znf_LIM"/>
</dbReference>
<dbReference type="PANTHER" id="PTHR24211">
    <property type="entry name" value="LIM DOMAIN-CONTAINING PROTEIN"/>
    <property type="match status" value="1"/>
</dbReference>
<dbReference type="PANTHER" id="PTHR24211:SF20">
    <property type="entry name" value="PROTEIN ESPINAS-RELATED"/>
    <property type="match status" value="1"/>
</dbReference>
<dbReference type="Pfam" id="PF00412">
    <property type="entry name" value="LIM"/>
    <property type="match status" value="2"/>
</dbReference>
<dbReference type="Pfam" id="PF06297">
    <property type="entry name" value="PET"/>
    <property type="match status" value="1"/>
</dbReference>
<dbReference type="SMART" id="SM00132">
    <property type="entry name" value="LIM"/>
    <property type="match status" value="3"/>
</dbReference>
<dbReference type="SUPFAM" id="SSF57716">
    <property type="entry name" value="Glucocorticoid receptor-like (DNA-binding domain)"/>
    <property type="match status" value="2"/>
</dbReference>
<dbReference type="PROSITE" id="PS00478">
    <property type="entry name" value="LIM_DOMAIN_1"/>
    <property type="match status" value="2"/>
</dbReference>
<dbReference type="PROSITE" id="PS50023">
    <property type="entry name" value="LIM_DOMAIN_2"/>
    <property type="match status" value="3"/>
</dbReference>
<dbReference type="PROSITE" id="PS51303">
    <property type="entry name" value="PET"/>
    <property type="match status" value="1"/>
</dbReference>
<sequence length="1299" mass="140722">MSSLSTGGGAGGSSGGPGGADAAAAPAAGQATVTATGNMEPAMVPRTANLLACKQWWRVCFLYGDQQKYYRQLYSKAAAQRLADANQEPDNARDREYDTVDCDLIAGQLDAVEDADDGIDLGDHSSTPKGGATTAGRPLFPHSSSPRRSKKLLRSLRAHVRGEKLPKNDTTTANESSEVTQRNARVTVLDDPFLFGIDADHLGDLVVRGKRYSTLDATENMARFYAEQEATAQVLEIIEQEEESPEQEAPKPALPPKQKQQRPVPPLPPPPANRVTQDQGTQPAAPQVPLQPLTAGDLQFLNLSLRQRSLPRSMKPFKDAHDISFTFNELDTSAEPEVATGAAQQESNEPISRTPLTQISYLQKIPTLPRHFSPSGQGLATPPALGSGGMGLPSSSSASALYAAQAAAGILPTSPLPLQRHQQYLPPHHQQHPGAGMGPGPGSGAAAGPPLGPQYSPGCSANPKYSNAQLPPPPHHHHQLSPALSTPSPPSLLHHPAGGTSSASAHAPFLGGPHMDMQRQSHSDDDSGCALEEYTWVPPGLRPDQVRLYFSQIPDDKVPYVNSPGEQYRVRQLLHQLPPHDNEVRYCHSLTDEERKELRLFSTQRKRDALGRGNVRQLMSARPCDGCDDLISTGDIAVFATRLGPNASWHPACFACSVCRELLVDLIYFHRDGRMYCGRHHAETLKPRCSACDEIILADECTEAEGRAWHMNHFACHECDKQLGGQRYIMREGKPYCLHCFDAMFAEYCDYCGEAIGVDQGQMSHDGQHWHATDECFSCNTCRCSLLGRAFLPRRGAIYCSIACSKGEPPTPSDSSGTGMYTTPTPPTQRVRPHPQAPLPARIPSSHASSSPPMSPQQQQQHQATFNQAMYQMQSQQMEAAGGLVDQSKSYAASDSDAGVVKDLEHGGHMGGGDLTDFSGGRASSTSQNLSPLNSPGDFQPHFLPKPMELQRDGVYNFNEMSSNLDAAWSAKPTNSYHLQRQLLENPHTASMPELAGKLVAPPAHMQHLSQLHAVSSHQFQQHEYADILHPPPPPPGEIPELPTPNLSVASTALPPELMGSPTHSAGDRSLNTPMSTQSASHAPPHPVSILSGASSSSPMSGEPAKKKGVRFEGIPDTLPRSRSYSGNGAGTSGGGERERDRDKDKEGGGRHGHGHSSRRRRRRKSSSSSSHHRSGSGHRSHSTTRADTYAPAQPLSSSYQGPPSVLQAANLVHESPSRQQREREREREREESEESDVCSTCSSSSSSSEDYMMMYQLPQRRHYGGVRVSYVPNDALAYDRKRKPSELGGDKDKNCIIS</sequence>
<keyword id="KW-0025">Alternative splicing</keyword>
<keyword id="KW-1003">Cell membrane</keyword>
<keyword id="KW-0217">Developmental protein</keyword>
<keyword id="KW-0440">LIM domain</keyword>
<keyword id="KW-0472">Membrane</keyword>
<keyword id="KW-0479">Metal-binding</keyword>
<keyword id="KW-1185">Reference proteome</keyword>
<keyword id="KW-0677">Repeat</keyword>
<keyword id="KW-0862">Zinc</keyword>
<protein>
    <recommendedName>
        <fullName>Protein prickle</fullName>
    </recommendedName>
    <alternativeName>
        <fullName>Protein spiny legs</fullName>
    </alternativeName>
</protein>